<organism>
    <name type="scientific">Bartonella tribocorum (strain CIP 105476 / IBS 506)</name>
    <dbReference type="NCBI Taxonomy" id="382640"/>
    <lineage>
        <taxon>Bacteria</taxon>
        <taxon>Pseudomonadati</taxon>
        <taxon>Pseudomonadota</taxon>
        <taxon>Alphaproteobacteria</taxon>
        <taxon>Hyphomicrobiales</taxon>
        <taxon>Bartonellaceae</taxon>
        <taxon>Bartonella</taxon>
    </lineage>
</organism>
<comment type="function">
    <text evidence="1">Major role in the synthesis of nucleoside triphosphates other than ATP. The ATP gamma phosphate is transferred to the NDP beta phosphate via a ping-pong mechanism, using a phosphorylated active-site intermediate.</text>
</comment>
<comment type="catalytic activity">
    <reaction evidence="1">
        <text>a 2'-deoxyribonucleoside 5'-diphosphate + ATP = a 2'-deoxyribonucleoside 5'-triphosphate + ADP</text>
        <dbReference type="Rhea" id="RHEA:44640"/>
        <dbReference type="ChEBI" id="CHEBI:30616"/>
        <dbReference type="ChEBI" id="CHEBI:61560"/>
        <dbReference type="ChEBI" id="CHEBI:73316"/>
        <dbReference type="ChEBI" id="CHEBI:456216"/>
        <dbReference type="EC" id="2.7.4.6"/>
    </reaction>
</comment>
<comment type="catalytic activity">
    <reaction evidence="1">
        <text>a ribonucleoside 5'-diphosphate + ATP = a ribonucleoside 5'-triphosphate + ADP</text>
        <dbReference type="Rhea" id="RHEA:18113"/>
        <dbReference type="ChEBI" id="CHEBI:30616"/>
        <dbReference type="ChEBI" id="CHEBI:57930"/>
        <dbReference type="ChEBI" id="CHEBI:61557"/>
        <dbReference type="ChEBI" id="CHEBI:456216"/>
        <dbReference type="EC" id="2.7.4.6"/>
    </reaction>
</comment>
<comment type="cofactor">
    <cofactor evidence="1">
        <name>Mg(2+)</name>
        <dbReference type="ChEBI" id="CHEBI:18420"/>
    </cofactor>
</comment>
<comment type="subunit">
    <text evidence="1">Homotetramer.</text>
</comment>
<comment type="subcellular location">
    <subcellularLocation>
        <location evidence="1">Cytoplasm</location>
    </subcellularLocation>
</comment>
<comment type="similarity">
    <text evidence="1">Belongs to the NDK family.</text>
</comment>
<gene>
    <name evidence="1" type="primary">ndk</name>
    <name type="ordered locus">BT_0836</name>
</gene>
<sequence length="140" mass="15550">MALERTFSMIKPDATRRNLTGAITKMLEDAGLRVIASKRVWMSKREAEKFYAVHKERPFFSELVEFMSSGPTVVQVLEGENAIAKNREVMGATNPSDAEEGTIRKVHALSIGENSVHGSDSAETAKTEITFWFSEIEIVG</sequence>
<feature type="chain" id="PRO_1000080953" description="Nucleoside diphosphate kinase">
    <location>
        <begin position="1"/>
        <end position="140"/>
    </location>
</feature>
<feature type="active site" description="Pros-phosphohistidine intermediate" evidence="1">
    <location>
        <position position="117"/>
    </location>
</feature>
<feature type="binding site" evidence="1">
    <location>
        <position position="11"/>
    </location>
    <ligand>
        <name>ATP</name>
        <dbReference type="ChEBI" id="CHEBI:30616"/>
    </ligand>
</feature>
<feature type="binding site" evidence="1">
    <location>
        <position position="59"/>
    </location>
    <ligand>
        <name>ATP</name>
        <dbReference type="ChEBI" id="CHEBI:30616"/>
    </ligand>
</feature>
<feature type="binding site" evidence="1">
    <location>
        <position position="87"/>
    </location>
    <ligand>
        <name>ATP</name>
        <dbReference type="ChEBI" id="CHEBI:30616"/>
    </ligand>
</feature>
<feature type="binding site" evidence="1">
    <location>
        <position position="93"/>
    </location>
    <ligand>
        <name>ATP</name>
        <dbReference type="ChEBI" id="CHEBI:30616"/>
    </ligand>
</feature>
<feature type="binding site" evidence="1">
    <location>
        <position position="104"/>
    </location>
    <ligand>
        <name>ATP</name>
        <dbReference type="ChEBI" id="CHEBI:30616"/>
    </ligand>
</feature>
<feature type="binding site" evidence="1">
    <location>
        <position position="114"/>
    </location>
    <ligand>
        <name>ATP</name>
        <dbReference type="ChEBI" id="CHEBI:30616"/>
    </ligand>
</feature>
<reference key="1">
    <citation type="journal article" date="2007" name="Nat. Genet.">
        <title>Genomic analysis of Bartonella identifies type IV secretion systems as host adaptability factors.</title>
        <authorList>
            <person name="Saenz H.L."/>
            <person name="Engel P."/>
            <person name="Stoeckli M.C."/>
            <person name="Lanz C."/>
            <person name="Raddatz G."/>
            <person name="Vayssier-Taussat M."/>
            <person name="Birtles R."/>
            <person name="Schuster S.C."/>
            <person name="Dehio C."/>
        </authorList>
    </citation>
    <scope>NUCLEOTIDE SEQUENCE [LARGE SCALE GENOMIC DNA]</scope>
    <source>
        <strain>CIP 105476 / IBS 506</strain>
    </source>
</reference>
<dbReference type="EC" id="2.7.4.6" evidence="1"/>
<dbReference type="EMBL" id="AM260525">
    <property type="protein sequence ID" value="CAK01244.1"/>
    <property type="molecule type" value="Genomic_DNA"/>
</dbReference>
<dbReference type="RefSeq" id="WP_012231368.1">
    <property type="nucleotide sequence ID" value="NC_010161.1"/>
</dbReference>
<dbReference type="SMR" id="A9IS02"/>
<dbReference type="KEGG" id="btr:BT_0836"/>
<dbReference type="eggNOG" id="COG0105">
    <property type="taxonomic scope" value="Bacteria"/>
</dbReference>
<dbReference type="HOGENOM" id="CLU_060216_8_1_5"/>
<dbReference type="Proteomes" id="UP000001592">
    <property type="component" value="Chromosome"/>
</dbReference>
<dbReference type="GO" id="GO:0005737">
    <property type="term" value="C:cytoplasm"/>
    <property type="evidence" value="ECO:0007669"/>
    <property type="project" value="UniProtKB-SubCell"/>
</dbReference>
<dbReference type="GO" id="GO:0005524">
    <property type="term" value="F:ATP binding"/>
    <property type="evidence" value="ECO:0007669"/>
    <property type="project" value="UniProtKB-UniRule"/>
</dbReference>
<dbReference type="GO" id="GO:0046872">
    <property type="term" value="F:metal ion binding"/>
    <property type="evidence" value="ECO:0007669"/>
    <property type="project" value="UniProtKB-KW"/>
</dbReference>
<dbReference type="GO" id="GO:0004550">
    <property type="term" value="F:nucleoside diphosphate kinase activity"/>
    <property type="evidence" value="ECO:0007669"/>
    <property type="project" value="UniProtKB-UniRule"/>
</dbReference>
<dbReference type="GO" id="GO:0006241">
    <property type="term" value="P:CTP biosynthetic process"/>
    <property type="evidence" value="ECO:0007669"/>
    <property type="project" value="UniProtKB-UniRule"/>
</dbReference>
<dbReference type="GO" id="GO:0006183">
    <property type="term" value="P:GTP biosynthetic process"/>
    <property type="evidence" value="ECO:0007669"/>
    <property type="project" value="UniProtKB-UniRule"/>
</dbReference>
<dbReference type="GO" id="GO:0006228">
    <property type="term" value="P:UTP biosynthetic process"/>
    <property type="evidence" value="ECO:0007669"/>
    <property type="project" value="UniProtKB-UniRule"/>
</dbReference>
<dbReference type="CDD" id="cd04413">
    <property type="entry name" value="NDPk_I"/>
    <property type="match status" value="1"/>
</dbReference>
<dbReference type="FunFam" id="3.30.70.141:FF:000003">
    <property type="entry name" value="Nucleoside diphosphate kinase"/>
    <property type="match status" value="1"/>
</dbReference>
<dbReference type="Gene3D" id="3.30.70.141">
    <property type="entry name" value="Nucleoside diphosphate kinase-like domain"/>
    <property type="match status" value="1"/>
</dbReference>
<dbReference type="HAMAP" id="MF_00451">
    <property type="entry name" value="NDP_kinase"/>
    <property type="match status" value="1"/>
</dbReference>
<dbReference type="InterPro" id="IPR034907">
    <property type="entry name" value="NDK-like_dom"/>
</dbReference>
<dbReference type="InterPro" id="IPR036850">
    <property type="entry name" value="NDK-like_dom_sf"/>
</dbReference>
<dbReference type="InterPro" id="IPR001564">
    <property type="entry name" value="Nucleoside_diP_kinase"/>
</dbReference>
<dbReference type="NCBIfam" id="NF001908">
    <property type="entry name" value="PRK00668.1"/>
    <property type="match status" value="1"/>
</dbReference>
<dbReference type="PANTHER" id="PTHR11349">
    <property type="entry name" value="NUCLEOSIDE DIPHOSPHATE KINASE"/>
    <property type="match status" value="1"/>
</dbReference>
<dbReference type="Pfam" id="PF00334">
    <property type="entry name" value="NDK"/>
    <property type="match status" value="1"/>
</dbReference>
<dbReference type="PRINTS" id="PR01243">
    <property type="entry name" value="NUCDPKINASE"/>
</dbReference>
<dbReference type="SMART" id="SM00562">
    <property type="entry name" value="NDK"/>
    <property type="match status" value="1"/>
</dbReference>
<dbReference type="SUPFAM" id="SSF54919">
    <property type="entry name" value="Nucleoside diphosphate kinase, NDK"/>
    <property type="match status" value="1"/>
</dbReference>
<dbReference type="PROSITE" id="PS51374">
    <property type="entry name" value="NDPK_LIKE"/>
    <property type="match status" value="1"/>
</dbReference>
<protein>
    <recommendedName>
        <fullName evidence="1">Nucleoside diphosphate kinase</fullName>
        <shortName evidence="1">NDK</shortName>
        <shortName evidence="1">NDP kinase</shortName>
        <ecNumber evidence="1">2.7.4.6</ecNumber>
    </recommendedName>
    <alternativeName>
        <fullName evidence="1">Nucleoside-2-P kinase</fullName>
    </alternativeName>
</protein>
<proteinExistence type="inferred from homology"/>
<evidence type="ECO:0000255" key="1">
    <source>
        <dbReference type="HAMAP-Rule" id="MF_00451"/>
    </source>
</evidence>
<accession>A9IS02</accession>
<keyword id="KW-0067">ATP-binding</keyword>
<keyword id="KW-0963">Cytoplasm</keyword>
<keyword id="KW-0418">Kinase</keyword>
<keyword id="KW-0460">Magnesium</keyword>
<keyword id="KW-0479">Metal-binding</keyword>
<keyword id="KW-0546">Nucleotide metabolism</keyword>
<keyword id="KW-0547">Nucleotide-binding</keyword>
<keyword id="KW-0597">Phosphoprotein</keyword>
<keyword id="KW-0808">Transferase</keyword>
<name>NDK_BART1</name>